<sequence length="54" mass="5962">MSTATFVDIIIAILLPPLGVFLRFGCGVEFWICLVLTLLGYIPGIIYAIYVLTK</sequence>
<gene>
    <name type="primary">RCI2A</name>
    <name type="synonym">LTI6A</name>
    <name type="ordered locus">At3g05880</name>
    <name type="ORF">F10A16.18</name>
</gene>
<proteinExistence type="evidence at transcript level"/>
<name>RCI2A_ARATH</name>
<feature type="chain" id="PRO_0000193972" description="Hydrophobic protein RCI2A">
    <location>
        <begin position="1"/>
        <end position="54"/>
    </location>
</feature>
<feature type="transmembrane region" description="Helical" evidence="1">
    <location>
        <begin position="2"/>
        <end position="22"/>
    </location>
</feature>
<feature type="transmembrane region" description="Helical" evidence="1">
    <location>
        <begin position="32"/>
        <end position="52"/>
    </location>
</feature>
<reference key="1">
    <citation type="journal article" date="1997" name="Plant Physiol.">
        <title>Two homologous low-temperature-inducible genes from Arabidopsis encode highly hydrophobic proteins.</title>
        <authorList>
            <person name="Capel J."/>
            <person name="Jarillo J.A."/>
            <person name="Salinas J."/>
            <person name="Martinez-Zapater J.M."/>
        </authorList>
    </citation>
    <scope>NUCLEOTIDE SEQUENCE</scope>
    <source>
        <strain>cv. Columbia</strain>
    </source>
</reference>
<reference key="2">
    <citation type="submission" date="1998-11" db="EMBL/GenBank/DDBJ databases">
        <title>Isolation and characterization of two homologous low temperature and salt responsive genes in Arabidopsis thaliana.</title>
        <authorList>
            <person name="Nylander M."/>
            <person name="Helenius E."/>
            <person name="Lindgren O."/>
            <person name="Baudo M.M."/>
            <person name="Heino P."/>
        </authorList>
    </citation>
    <scope>NUCLEOTIDE SEQUENCE</scope>
</reference>
<reference key="3">
    <citation type="journal article" date="2001" name="Plant Physiol.">
        <title>Developmental and stress regulation of RCI2A and RCI2B, two cold-inducible genes of Arabidopsis encoding highly conserved hydrophobic proteins.</title>
        <authorList>
            <person name="Medina J."/>
            <person name="Catala R."/>
            <person name="Salinas J."/>
        </authorList>
    </citation>
    <scope>NUCLEOTIDE SEQUENCE</scope>
    <source>
        <strain>cv. Columbia</strain>
    </source>
</reference>
<reference key="4">
    <citation type="journal article" date="2000" name="Nature">
        <title>Sequence and analysis of chromosome 3 of the plant Arabidopsis thaliana.</title>
        <authorList>
            <person name="Salanoubat M."/>
            <person name="Lemcke K."/>
            <person name="Rieger M."/>
            <person name="Ansorge W."/>
            <person name="Unseld M."/>
            <person name="Fartmann B."/>
            <person name="Valle G."/>
            <person name="Bloecker H."/>
            <person name="Perez-Alonso M."/>
            <person name="Obermaier B."/>
            <person name="Delseny M."/>
            <person name="Boutry M."/>
            <person name="Grivell L.A."/>
            <person name="Mache R."/>
            <person name="Puigdomenech P."/>
            <person name="De Simone V."/>
            <person name="Choisne N."/>
            <person name="Artiguenave F."/>
            <person name="Robert C."/>
            <person name="Brottier P."/>
            <person name="Wincker P."/>
            <person name="Cattolico L."/>
            <person name="Weissenbach J."/>
            <person name="Saurin W."/>
            <person name="Quetier F."/>
            <person name="Schaefer M."/>
            <person name="Mueller-Auer S."/>
            <person name="Gabel C."/>
            <person name="Fuchs M."/>
            <person name="Benes V."/>
            <person name="Wurmbach E."/>
            <person name="Drzonek H."/>
            <person name="Erfle H."/>
            <person name="Jordan N."/>
            <person name="Bangert S."/>
            <person name="Wiedelmann R."/>
            <person name="Kranz H."/>
            <person name="Voss H."/>
            <person name="Holland R."/>
            <person name="Brandt P."/>
            <person name="Nyakatura G."/>
            <person name="Vezzi A."/>
            <person name="D'Angelo M."/>
            <person name="Pallavicini A."/>
            <person name="Toppo S."/>
            <person name="Simionati B."/>
            <person name="Conrad A."/>
            <person name="Hornischer K."/>
            <person name="Kauer G."/>
            <person name="Loehnert T.-H."/>
            <person name="Nordsiek G."/>
            <person name="Reichelt J."/>
            <person name="Scharfe M."/>
            <person name="Schoen O."/>
            <person name="Bargues M."/>
            <person name="Terol J."/>
            <person name="Climent J."/>
            <person name="Navarro P."/>
            <person name="Collado C."/>
            <person name="Perez-Perez A."/>
            <person name="Ottenwaelder B."/>
            <person name="Duchemin D."/>
            <person name="Cooke R."/>
            <person name="Laudie M."/>
            <person name="Berger-Llauro C."/>
            <person name="Purnelle B."/>
            <person name="Masuy D."/>
            <person name="de Haan M."/>
            <person name="Maarse A.C."/>
            <person name="Alcaraz J.-P."/>
            <person name="Cottet A."/>
            <person name="Casacuberta E."/>
            <person name="Monfort A."/>
            <person name="Argiriou A."/>
            <person name="Flores M."/>
            <person name="Liguori R."/>
            <person name="Vitale D."/>
            <person name="Mannhaupt G."/>
            <person name="Haase D."/>
            <person name="Schoof H."/>
            <person name="Rudd S."/>
            <person name="Zaccaria P."/>
            <person name="Mewes H.-W."/>
            <person name="Mayer K.F.X."/>
            <person name="Kaul S."/>
            <person name="Town C.D."/>
            <person name="Koo H.L."/>
            <person name="Tallon L.J."/>
            <person name="Jenkins J."/>
            <person name="Rooney T."/>
            <person name="Rizzo M."/>
            <person name="Walts A."/>
            <person name="Utterback T."/>
            <person name="Fujii C.Y."/>
            <person name="Shea T.P."/>
            <person name="Creasy T.H."/>
            <person name="Haas B."/>
            <person name="Maiti R."/>
            <person name="Wu D."/>
            <person name="Peterson J."/>
            <person name="Van Aken S."/>
            <person name="Pai G."/>
            <person name="Militscher J."/>
            <person name="Sellers P."/>
            <person name="Gill J.E."/>
            <person name="Feldblyum T.V."/>
            <person name="Preuss D."/>
            <person name="Lin X."/>
            <person name="Nierman W.C."/>
            <person name="Salzberg S.L."/>
            <person name="White O."/>
            <person name="Venter J.C."/>
            <person name="Fraser C.M."/>
            <person name="Kaneko T."/>
            <person name="Nakamura Y."/>
            <person name="Sato S."/>
            <person name="Kato T."/>
            <person name="Asamizu E."/>
            <person name="Sasamoto S."/>
            <person name="Kimura T."/>
            <person name="Idesawa K."/>
            <person name="Kawashima K."/>
            <person name="Kishida Y."/>
            <person name="Kiyokawa C."/>
            <person name="Kohara M."/>
            <person name="Matsumoto M."/>
            <person name="Matsuno A."/>
            <person name="Muraki A."/>
            <person name="Nakayama S."/>
            <person name="Nakazaki N."/>
            <person name="Shinpo S."/>
            <person name="Takeuchi C."/>
            <person name="Wada T."/>
            <person name="Watanabe A."/>
            <person name="Yamada M."/>
            <person name="Yasuda M."/>
            <person name="Tabata S."/>
        </authorList>
    </citation>
    <scope>NUCLEOTIDE SEQUENCE [LARGE SCALE GENOMIC DNA]</scope>
    <source>
        <strain>cv. Columbia</strain>
    </source>
</reference>
<reference key="5">
    <citation type="journal article" date="2017" name="Plant J.">
        <title>Araport11: a complete reannotation of the Arabidopsis thaliana reference genome.</title>
        <authorList>
            <person name="Cheng C.Y."/>
            <person name="Krishnakumar V."/>
            <person name="Chan A.P."/>
            <person name="Thibaud-Nissen F."/>
            <person name="Schobel S."/>
            <person name="Town C.D."/>
        </authorList>
    </citation>
    <scope>GENOME REANNOTATION</scope>
    <source>
        <strain>cv. Columbia</strain>
    </source>
</reference>
<reference key="6">
    <citation type="journal article" date="2003" name="Science">
        <title>Empirical analysis of transcriptional activity in the Arabidopsis genome.</title>
        <authorList>
            <person name="Yamada K."/>
            <person name="Lim J."/>
            <person name="Dale J.M."/>
            <person name="Chen H."/>
            <person name="Shinn P."/>
            <person name="Palm C.J."/>
            <person name="Southwick A.M."/>
            <person name="Wu H.C."/>
            <person name="Kim C.J."/>
            <person name="Nguyen M."/>
            <person name="Pham P.K."/>
            <person name="Cheuk R.F."/>
            <person name="Karlin-Newmann G."/>
            <person name="Liu S.X."/>
            <person name="Lam B."/>
            <person name="Sakano H."/>
            <person name="Wu T."/>
            <person name="Yu G."/>
            <person name="Miranda M."/>
            <person name="Quach H.L."/>
            <person name="Tripp M."/>
            <person name="Chang C.H."/>
            <person name="Lee J.M."/>
            <person name="Toriumi M.J."/>
            <person name="Chan M.M."/>
            <person name="Tang C.C."/>
            <person name="Onodera C.S."/>
            <person name="Deng J.M."/>
            <person name="Akiyama K."/>
            <person name="Ansari Y."/>
            <person name="Arakawa T."/>
            <person name="Banh J."/>
            <person name="Banno F."/>
            <person name="Bowser L."/>
            <person name="Brooks S.Y."/>
            <person name="Carninci P."/>
            <person name="Chao Q."/>
            <person name="Choy N."/>
            <person name="Enju A."/>
            <person name="Goldsmith A.D."/>
            <person name="Gurjal M."/>
            <person name="Hansen N.F."/>
            <person name="Hayashizaki Y."/>
            <person name="Johnson-Hopson C."/>
            <person name="Hsuan V.W."/>
            <person name="Iida K."/>
            <person name="Karnes M."/>
            <person name="Khan S."/>
            <person name="Koesema E."/>
            <person name="Ishida J."/>
            <person name="Jiang P.X."/>
            <person name="Jones T."/>
            <person name="Kawai J."/>
            <person name="Kamiya A."/>
            <person name="Meyers C."/>
            <person name="Nakajima M."/>
            <person name="Narusaka M."/>
            <person name="Seki M."/>
            <person name="Sakurai T."/>
            <person name="Satou M."/>
            <person name="Tamse R."/>
            <person name="Vaysberg M."/>
            <person name="Wallender E.K."/>
            <person name="Wong C."/>
            <person name="Yamamura Y."/>
            <person name="Yuan S."/>
            <person name="Shinozaki K."/>
            <person name="Davis R.W."/>
            <person name="Theologis A."/>
            <person name="Ecker J.R."/>
        </authorList>
    </citation>
    <scope>NUCLEOTIDE SEQUENCE [LARGE SCALE MRNA]</scope>
    <source>
        <strain>cv. Columbia</strain>
    </source>
</reference>
<protein>
    <recommendedName>
        <fullName>Hydrophobic protein RCI2A</fullName>
    </recommendedName>
    <alternativeName>
        <fullName>Low temperature and salt-responsive protein LTI6A</fullName>
    </alternativeName>
</protein>
<accession>Q9ZNQ7</accession>
<organism>
    <name type="scientific">Arabidopsis thaliana</name>
    <name type="common">Mouse-ear cress</name>
    <dbReference type="NCBI Taxonomy" id="3702"/>
    <lineage>
        <taxon>Eukaryota</taxon>
        <taxon>Viridiplantae</taxon>
        <taxon>Streptophyta</taxon>
        <taxon>Embryophyta</taxon>
        <taxon>Tracheophyta</taxon>
        <taxon>Spermatophyta</taxon>
        <taxon>Magnoliopsida</taxon>
        <taxon>eudicotyledons</taxon>
        <taxon>Gunneridae</taxon>
        <taxon>Pentapetalae</taxon>
        <taxon>rosids</taxon>
        <taxon>malvids</taxon>
        <taxon>Brassicales</taxon>
        <taxon>Brassicaceae</taxon>
        <taxon>Camelineae</taxon>
        <taxon>Arabidopsis</taxon>
    </lineage>
</organism>
<evidence type="ECO:0000255" key="1"/>
<evidence type="ECO:0000305" key="2"/>
<keyword id="KW-0472">Membrane</keyword>
<keyword id="KW-1185">Reference proteome</keyword>
<keyword id="KW-0812">Transmembrane</keyword>
<keyword id="KW-1133">Transmembrane helix</keyword>
<dbReference type="EMBL" id="AF122005">
    <property type="protein sequence ID" value="AAD17302.1"/>
    <property type="molecule type" value="mRNA"/>
</dbReference>
<dbReference type="EMBL" id="AF104221">
    <property type="protein sequence ID" value="AAC97512.1"/>
    <property type="molecule type" value="Genomic_DNA"/>
</dbReference>
<dbReference type="EMBL" id="AF264749">
    <property type="protein sequence ID" value="AAK50619.1"/>
    <property type="molecule type" value="Genomic_DNA"/>
</dbReference>
<dbReference type="EMBL" id="AC012393">
    <property type="protein sequence ID" value="AAF26090.1"/>
    <property type="molecule type" value="Genomic_DNA"/>
</dbReference>
<dbReference type="EMBL" id="CP002686">
    <property type="protein sequence ID" value="AEE74311.1"/>
    <property type="molecule type" value="Genomic_DNA"/>
</dbReference>
<dbReference type="EMBL" id="AY037244">
    <property type="protein sequence ID" value="AAK59845.1"/>
    <property type="molecule type" value="mRNA"/>
</dbReference>
<dbReference type="EMBL" id="AY039859">
    <property type="protein sequence ID" value="AAK63963.1"/>
    <property type="molecule type" value="mRNA"/>
</dbReference>
<dbReference type="EMBL" id="AY077650">
    <property type="protein sequence ID" value="AAL76128.1"/>
    <property type="molecule type" value="mRNA"/>
</dbReference>
<dbReference type="RefSeq" id="NP_187239.1">
    <property type="nucleotide sequence ID" value="NM_111462.2"/>
</dbReference>
<dbReference type="SMR" id="Q9ZNQ7"/>
<dbReference type="FunCoup" id="Q9ZNQ7">
    <property type="interactions" value="69"/>
</dbReference>
<dbReference type="STRING" id="3702.Q9ZNQ7"/>
<dbReference type="TCDB" id="9.B.12.1.6">
    <property type="family name" value="the sensitivity to sodium or salt stress-induced hydrophobic peptide (sna) family"/>
</dbReference>
<dbReference type="PaxDb" id="3702-AT3G05880.1"/>
<dbReference type="EnsemblPlants" id="AT3G05880.1">
    <property type="protein sequence ID" value="AT3G05880.1"/>
    <property type="gene ID" value="AT3G05880"/>
</dbReference>
<dbReference type="GeneID" id="819757"/>
<dbReference type="Gramene" id="AT3G05880.1">
    <property type="protein sequence ID" value="AT3G05880.1"/>
    <property type="gene ID" value="AT3G05880"/>
</dbReference>
<dbReference type="KEGG" id="ath:AT3G05880"/>
<dbReference type="Araport" id="AT3G05880"/>
<dbReference type="TAIR" id="AT3G05880">
    <property type="gene designation" value="RCI2A"/>
</dbReference>
<dbReference type="eggNOG" id="KOG1773">
    <property type="taxonomic scope" value="Eukaryota"/>
</dbReference>
<dbReference type="HOGENOM" id="CLU_107649_6_0_1"/>
<dbReference type="InParanoid" id="Q9ZNQ7"/>
<dbReference type="OMA" id="LELWICL"/>
<dbReference type="PhylomeDB" id="Q9ZNQ7"/>
<dbReference type="PRO" id="PR:Q9ZNQ7"/>
<dbReference type="Proteomes" id="UP000006548">
    <property type="component" value="Chromosome 3"/>
</dbReference>
<dbReference type="ExpressionAtlas" id="Q9ZNQ7">
    <property type="expression patterns" value="baseline and differential"/>
</dbReference>
<dbReference type="GO" id="GO:0016020">
    <property type="term" value="C:membrane"/>
    <property type="evidence" value="ECO:0007669"/>
    <property type="project" value="UniProtKB-SubCell"/>
</dbReference>
<dbReference type="GO" id="GO:0042538">
    <property type="term" value="P:hyperosmotic salinity response"/>
    <property type="evidence" value="ECO:0000304"/>
    <property type="project" value="TAIR"/>
</dbReference>
<dbReference type="GO" id="GO:0009737">
    <property type="term" value="P:response to abscisic acid"/>
    <property type="evidence" value="ECO:0000304"/>
    <property type="project" value="TAIR"/>
</dbReference>
<dbReference type="GO" id="GO:0009409">
    <property type="term" value="P:response to cold"/>
    <property type="evidence" value="ECO:0000304"/>
    <property type="project" value="TAIR"/>
</dbReference>
<dbReference type="InterPro" id="IPR000612">
    <property type="entry name" value="PMP3"/>
</dbReference>
<dbReference type="PANTHER" id="PTHR21659">
    <property type="entry name" value="HYDROPHOBIC PROTEIN RCI2 LOW TEMPERATURE AND SALT RESPONSIVE PROTEIN LTI6 -RELATED"/>
    <property type="match status" value="1"/>
</dbReference>
<dbReference type="PANTHER" id="PTHR21659:SF113">
    <property type="entry name" value="HYDROPHOBIC PROTEIN RCI2A"/>
    <property type="match status" value="1"/>
</dbReference>
<dbReference type="Pfam" id="PF01679">
    <property type="entry name" value="Pmp3"/>
    <property type="match status" value="1"/>
</dbReference>
<dbReference type="PROSITE" id="PS01309">
    <property type="entry name" value="UPF0057"/>
    <property type="match status" value="1"/>
</dbReference>
<comment type="subcellular location">
    <subcellularLocation>
        <location evidence="2">Membrane</location>
        <topology evidence="2">Multi-pass membrane protein</topology>
    </subcellularLocation>
</comment>
<comment type="induction">
    <text>By low temperature. Also promoted by abscisic acid (ABA) and dehydration but is not a general response to stress conditions.</text>
</comment>
<comment type="similarity">
    <text evidence="2">Belongs to the UPF0057 (PMP3) family.</text>
</comment>